<protein>
    <recommendedName>
        <fullName evidence="1">Large ribosomal subunit protein uL30</fullName>
    </recommendedName>
    <alternativeName>
        <fullName evidence="2">50S ribosomal protein L30</fullName>
    </alternativeName>
</protein>
<keyword id="KW-0687">Ribonucleoprotein</keyword>
<keyword id="KW-0689">Ribosomal protein</keyword>
<gene>
    <name evidence="1" type="primary">rpmD</name>
    <name type="ordered locus">SPC_3491</name>
</gene>
<name>RL30_SALPC</name>
<organism>
    <name type="scientific">Salmonella paratyphi C (strain RKS4594)</name>
    <dbReference type="NCBI Taxonomy" id="476213"/>
    <lineage>
        <taxon>Bacteria</taxon>
        <taxon>Pseudomonadati</taxon>
        <taxon>Pseudomonadota</taxon>
        <taxon>Gammaproteobacteria</taxon>
        <taxon>Enterobacterales</taxon>
        <taxon>Enterobacteriaceae</taxon>
        <taxon>Salmonella</taxon>
    </lineage>
</organism>
<evidence type="ECO:0000255" key="1">
    <source>
        <dbReference type="HAMAP-Rule" id="MF_01371"/>
    </source>
</evidence>
<evidence type="ECO:0000305" key="2"/>
<dbReference type="EMBL" id="CP000857">
    <property type="protein sequence ID" value="ACN47575.1"/>
    <property type="molecule type" value="Genomic_DNA"/>
</dbReference>
<dbReference type="RefSeq" id="WP_001140434.1">
    <property type="nucleotide sequence ID" value="NC_012125.1"/>
</dbReference>
<dbReference type="SMR" id="C0PZW5"/>
<dbReference type="GeneID" id="97393185"/>
<dbReference type="KEGG" id="sei:SPC_3491"/>
<dbReference type="HOGENOM" id="CLU_131047_1_4_6"/>
<dbReference type="Proteomes" id="UP000001599">
    <property type="component" value="Chromosome"/>
</dbReference>
<dbReference type="GO" id="GO:0022625">
    <property type="term" value="C:cytosolic large ribosomal subunit"/>
    <property type="evidence" value="ECO:0007669"/>
    <property type="project" value="TreeGrafter"/>
</dbReference>
<dbReference type="GO" id="GO:0003735">
    <property type="term" value="F:structural constituent of ribosome"/>
    <property type="evidence" value="ECO:0007669"/>
    <property type="project" value="InterPro"/>
</dbReference>
<dbReference type="GO" id="GO:0006412">
    <property type="term" value="P:translation"/>
    <property type="evidence" value="ECO:0007669"/>
    <property type="project" value="UniProtKB-UniRule"/>
</dbReference>
<dbReference type="CDD" id="cd01658">
    <property type="entry name" value="Ribosomal_L30"/>
    <property type="match status" value="1"/>
</dbReference>
<dbReference type="FunFam" id="3.30.1390.20:FF:000001">
    <property type="entry name" value="50S ribosomal protein L30"/>
    <property type="match status" value="1"/>
</dbReference>
<dbReference type="Gene3D" id="3.30.1390.20">
    <property type="entry name" value="Ribosomal protein L30, ferredoxin-like fold domain"/>
    <property type="match status" value="1"/>
</dbReference>
<dbReference type="HAMAP" id="MF_01371_B">
    <property type="entry name" value="Ribosomal_uL30_B"/>
    <property type="match status" value="1"/>
</dbReference>
<dbReference type="InterPro" id="IPR036919">
    <property type="entry name" value="Ribo_uL30_ferredoxin-like_sf"/>
</dbReference>
<dbReference type="InterPro" id="IPR005996">
    <property type="entry name" value="Ribosomal_uL30_bac-type"/>
</dbReference>
<dbReference type="InterPro" id="IPR018038">
    <property type="entry name" value="Ribosomal_uL30_CS"/>
</dbReference>
<dbReference type="InterPro" id="IPR016082">
    <property type="entry name" value="Ribosomal_uL30_ferredoxin-like"/>
</dbReference>
<dbReference type="NCBIfam" id="TIGR01308">
    <property type="entry name" value="rpmD_bact"/>
    <property type="match status" value="1"/>
</dbReference>
<dbReference type="PANTHER" id="PTHR15892:SF2">
    <property type="entry name" value="LARGE RIBOSOMAL SUBUNIT PROTEIN UL30M"/>
    <property type="match status" value="1"/>
</dbReference>
<dbReference type="PANTHER" id="PTHR15892">
    <property type="entry name" value="MITOCHONDRIAL RIBOSOMAL PROTEIN L30"/>
    <property type="match status" value="1"/>
</dbReference>
<dbReference type="Pfam" id="PF00327">
    <property type="entry name" value="Ribosomal_L30"/>
    <property type="match status" value="1"/>
</dbReference>
<dbReference type="PIRSF" id="PIRSF002211">
    <property type="entry name" value="Ribosomal_L30_bac-type"/>
    <property type="match status" value="1"/>
</dbReference>
<dbReference type="SUPFAM" id="SSF55129">
    <property type="entry name" value="Ribosomal protein L30p/L7e"/>
    <property type="match status" value="1"/>
</dbReference>
<dbReference type="PROSITE" id="PS00634">
    <property type="entry name" value="RIBOSOMAL_L30"/>
    <property type="match status" value="1"/>
</dbReference>
<feature type="chain" id="PRO_1000184157" description="Large ribosomal subunit protein uL30">
    <location>
        <begin position="1"/>
        <end position="59"/>
    </location>
</feature>
<accession>C0PZW5</accession>
<reference key="1">
    <citation type="journal article" date="2009" name="PLoS ONE">
        <title>Salmonella paratyphi C: genetic divergence from Salmonella choleraesuis and pathogenic convergence with Salmonella typhi.</title>
        <authorList>
            <person name="Liu W.-Q."/>
            <person name="Feng Y."/>
            <person name="Wang Y."/>
            <person name="Zou Q.-H."/>
            <person name="Chen F."/>
            <person name="Guo J.-T."/>
            <person name="Peng Y.-H."/>
            <person name="Jin Y."/>
            <person name="Li Y.-G."/>
            <person name="Hu S.-N."/>
            <person name="Johnston R.N."/>
            <person name="Liu G.-R."/>
            <person name="Liu S.-L."/>
        </authorList>
    </citation>
    <scope>NUCLEOTIDE SEQUENCE [LARGE SCALE GENOMIC DNA]</scope>
    <source>
        <strain>RKS4594</strain>
    </source>
</reference>
<sequence length="59" mass="6514">MAKTIKITQTRSAIGRLPKHKATLLGLGLRRIGHTVEREDTPAVRGMVNAVSFMVKVEE</sequence>
<proteinExistence type="inferred from homology"/>
<comment type="subunit">
    <text evidence="1">Part of the 50S ribosomal subunit.</text>
</comment>
<comment type="similarity">
    <text evidence="1">Belongs to the universal ribosomal protein uL30 family.</text>
</comment>